<comment type="function">
    <text evidence="1">Catalyzes the formation of acetyl phosphate from acetate and ATP. Can also catalyze the reverse reaction.</text>
</comment>
<comment type="catalytic activity">
    <reaction evidence="1">
        <text>acetate + ATP = acetyl phosphate + ADP</text>
        <dbReference type="Rhea" id="RHEA:11352"/>
        <dbReference type="ChEBI" id="CHEBI:22191"/>
        <dbReference type="ChEBI" id="CHEBI:30089"/>
        <dbReference type="ChEBI" id="CHEBI:30616"/>
        <dbReference type="ChEBI" id="CHEBI:456216"/>
        <dbReference type="EC" id="2.7.2.1"/>
    </reaction>
</comment>
<comment type="cofactor">
    <cofactor evidence="1">
        <name>Mg(2+)</name>
        <dbReference type="ChEBI" id="CHEBI:18420"/>
    </cofactor>
    <cofactor evidence="1">
        <name>Mn(2+)</name>
        <dbReference type="ChEBI" id="CHEBI:29035"/>
    </cofactor>
    <text evidence="1">Mg(2+). Can also accept Mn(2+).</text>
</comment>
<comment type="pathway">
    <text evidence="1">Metabolic intermediate biosynthesis; acetyl-CoA biosynthesis; acetyl-CoA from acetate: step 1/2.</text>
</comment>
<comment type="subunit">
    <text evidence="1">Homodimer.</text>
</comment>
<comment type="subcellular location">
    <subcellularLocation>
        <location evidence="1">Cytoplasm</location>
    </subcellularLocation>
</comment>
<comment type="similarity">
    <text evidence="1">Belongs to the acetokinase family.</text>
</comment>
<accession>Q0BPA5</accession>
<proteinExistence type="inferred from homology"/>
<protein>
    <recommendedName>
        <fullName evidence="1">Acetate kinase</fullName>
        <ecNumber evidence="1">2.7.2.1</ecNumber>
    </recommendedName>
    <alternativeName>
        <fullName evidence="1">Acetokinase</fullName>
    </alternativeName>
</protein>
<name>ACKA_FRATO</name>
<evidence type="ECO:0000255" key="1">
    <source>
        <dbReference type="HAMAP-Rule" id="MF_00020"/>
    </source>
</evidence>
<sequence>MSEILVLNCGSSSVKFALINPHTSQSLVTGLAENIATKNCKVVFKAEHKIEKYLENGSYKDVFEMLKDFLVENKHLEKIVAIGHRVVHGGQYFSKSVLINADSLEKIKACIALAPLHNPAHIEGIRFCQQIFPELPQVAVFDTAFHQTVPSYIAEYAIPYELTHKHNIRKYGAHGTSHKYVSEQAAKILTQQKANVIVAHLGNGCSITAVVDGKSIDTSMGLTPLDGLVMGTRSGCIDPSIFAYIISDNLGWSVTEITNMLNKQSGLLGICGHNDMREVSQLAAKGDSLAKLAIEIFSHRVAKFVASYMIYFNKLDALVFTGGIGENAANIRKNIISKLANLGFMIDHQKNSNSETFINSKNSHNIMVIATNEELMIAQETQNLI</sequence>
<organism>
    <name type="scientific">Francisella tularensis subsp. holarctica (strain OSU18)</name>
    <dbReference type="NCBI Taxonomy" id="393011"/>
    <lineage>
        <taxon>Bacteria</taxon>
        <taxon>Pseudomonadati</taxon>
        <taxon>Pseudomonadota</taxon>
        <taxon>Gammaproteobacteria</taxon>
        <taxon>Thiotrichales</taxon>
        <taxon>Francisellaceae</taxon>
        <taxon>Francisella</taxon>
    </lineage>
</organism>
<reference key="1">
    <citation type="journal article" date="2006" name="J. Bacteriol.">
        <title>Chromosome rearrangement and diversification of Francisella tularensis revealed by the type B (OSU18) genome sequence.</title>
        <authorList>
            <person name="Petrosino J.F."/>
            <person name="Xiang Q."/>
            <person name="Karpathy S.E."/>
            <person name="Jiang H."/>
            <person name="Yerrapragada S."/>
            <person name="Liu Y."/>
            <person name="Gioia J."/>
            <person name="Hemphill L."/>
            <person name="Gonzalez A."/>
            <person name="Raghavan T.M."/>
            <person name="Uzman A."/>
            <person name="Fox G.E."/>
            <person name="Highlander S."/>
            <person name="Reichard M."/>
            <person name="Morton R.J."/>
            <person name="Clinkenbeard K.D."/>
            <person name="Weinstock G.M."/>
        </authorList>
    </citation>
    <scope>NUCLEOTIDE SEQUENCE [LARGE SCALE GENOMIC DNA]</scope>
    <source>
        <strain>OSU18</strain>
    </source>
</reference>
<gene>
    <name evidence="1" type="primary">ackA</name>
    <name type="ordered locus">FTH_0015</name>
</gene>
<keyword id="KW-0067">ATP-binding</keyword>
<keyword id="KW-0963">Cytoplasm</keyword>
<keyword id="KW-0418">Kinase</keyword>
<keyword id="KW-0460">Magnesium</keyword>
<keyword id="KW-0479">Metal-binding</keyword>
<keyword id="KW-0547">Nucleotide-binding</keyword>
<keyword id="KW-0808">Transferase</keyword>
<feature type="chain" id="PRO_1000089975" description="Acetate kinase">
    <location>
        <begin position="1"/>
        <end position="385"/>
    </location>
</feature>
<feature type="active site" description="Proton donor/acceptor" evidence="1">
    <location>
        <position position="142"/>
    </location>
</feature>
<feature type="binding site" evidence="1">
    <location>
        <position position="8"/>
    </location>
    <ligand>
        <name>Mg(2+)</name>
        <dbReference type="ChEBI" id="CHEBI:18420"/>
    </ligand>
</feature>
<feature type="binding site" evidence="1">
    <location>
        <position position="15"/>
    </location>
    <ligand>
        <name>ATP</name>
        <dbReference type="ChEBI" id="CHEBI:30616"/>
    </ligand>
</feature>
<feature type="binding site" evidence="1">
    <location>
        <position position="85"/>
    </location>
    <ligand>
        <name>substrate</name>
    </ligand>
</feature>
<feature type="binding site" evidence="1">
    <location>
        <begin position="200"/>
        <end position="204"/>
    </location>
    <ligand>
        <name>ATP</name>
        <dbReference type="ChEBI" id="CHEBI:30616"/>
    </ligand>
</feature>
<feature type="binding site" evidence="1">
    <location>
        <begin position="275"/>
        <end position="277"/>
    </location>
    <ligand>
        <name>ATP</name>
        <dbReference type="ChEBI" id="CHEBI:30616"/>
    </ligand>
</feature>
<feature type="binding site" evidence="1">
    <location>
        <begin position="323"/>
        <end position="327"/>
    </location>
    <ligand>
        <name>ATP</name>
        <dbReference type="ChEBI" id="CHEBI:30616"/>
    </ligand>
</feature>
<feature type="binding site" evidence="1">
    <location>
        <position position="373"/>
    </location>
    <ligand>
        <name>Mg(2+)</name>
        <dbReference type="ChEBI" id="CHEBI:18420"/>
    </ligand>
</feature>
<feature type="site" description="Transition state stabilizer" evidence="1">
    <location>
        <position position="174"/>
    </location>
</feature>
<feature type="site" description="Transition state stabilizer" evidence="1">
    <location>
        <position position="233"/>
    </location>
</feature>
<dbReference type="EC" id="2.7.2.1" evidence="1"/>
<dbReference type="EMBL" id="CP000437">
    <property type="protein sequence ID" value="ABI82079.1"/>
    <property type="molecule type" value="Genomic_DNA"/>
</dbReference>
<dbReference type="RefSeq" id="WP_011648535.1">
    <property type="nucleotide sequence ID" value="NC_008369.1"/>
</dbReference>
<dbReference type="SMR" id="Q0BPA5"/>
<dbReference type="KEGG" id="fth:FTH_0015"/>
<dbReference type="UniPathway" id="UPA00340">
    <property type="reaction ID" value="UER00458"/>
</dbReference>
<dbReference type="GO" id="GO:0005737">
    <property type="term" value="C:cytoplasm"/>
    <property type="evidence" value="ECO:0007669"/>
    <property type="project" value="UniProtKB-SubCell"/>
</dbReference>
<dbReference type="GO" id="GO:0008776">
    <property type="term" value="F:acetate kinase activity"/>
    <property type="evidence" value="ECO:0007669"/>
    <property type="project" value="UniProtKB-UniRule"/>
</dbReference>
<dbReference type="GO" id="GO:0005524">
    <property type="term" value="F:ATP binding"/>
    <property type="evidence" value="ECO:0007669"/>
    <property type="project" value="UniProtKB-KW"/>
</dbReference>
<dbReference type="GO" id="GO:0000287">
    <property type="term" value="F:magnesium ion binding"/>
    <property type="evidence" value="ECO:0007669"/>
    <property type="project" value="UniProtKB-UniRule"/>
</dbReference>
<dbReference type="GO" id="GO:0006083">
    <property type="term" value="P:acetate metabolic process"/>
    <property type="evidence" value="ECO:0007669"/>
    <property type="project" value="TreeGrafter"/>
</dbReference>
<dbReference type="GO" id="GO:0006085">
    <property type="term" value="P:acetyl-CoA biosynthetic process"/>
    <property type="evidence" value="ECO:0007669"/>
    <property type="project" value="UniProtKB-UniRule"/>
</dbReference>
<dbReference type="CDD" id="cd24010">
    <property type="entry name" value="ASKHA_NBD_AcK_PK"/>
    <property type="match status" value="1"/>
</dbReference>
<dbReference type="Gene3D" id="3.30.420.40">
    <property type="match status" value="2"/>
</dbReference>
<dbReference type="HAMAP" id="MF_00020">
    <property type="entry name" value="Acetate_kinase"/>
    <property type="match status" value="1"/>
</dbReference>
<dbReference type="InterPro" id="IPR004372">
    <property type="entry name" value="Ac/propionate_kinase"/>
</dbReference>
<dbReference type="InterPro" id="IPR000890">
    <property type="entry name" value="Aliphatic_acid_kin_short-chain"/>
</dbReference>
<dbReference type="InterPro" id="IPR023865">
    <property type="entry name" value="Aliphatic_acid_kinase_CS"/>
</dbReference>
<dbReference type="InterPro" id="IPR043129">
    <property type="entry name" value="ATPase_NBD"/>
</dbReference>
<dbReference type="NCBIfam" id="TIGR00016">
    <property type="entry name" value="ackA"/>
    <property type="match status" value="1"/>
</dbReference>
<dbReference type="PANTHER" id="PTHR21060">
    <property type="entry name" value="ACETATE KINASE"/>
    <property type="match status" value="1"/>
</dbReference>
<dbReference type="PANTHER" id="PTHR21060:SF15">
    <property type="entry name" value="ACETATE KINASE-RELATED"/>
    <property type="match status" value="1"/>
</dbReference>
<dbReference type="Pfam" id="PF00871">
    <property type="entry name" value="Acetate_kinase"/>
    <property type="match status" value="1"/>
</dbReference>
<dbReference type="PIRSF" id="PIRSF000722">
    <property type="entry name" value="Acetate_prop_kin"/>
    <property type="match status" value="1"/>
</dbReference>
<dbReference type="PRINTS" id="PR00471">
    <property type="entry name" value="ACETATEKNASE"/>
</dbReference>
<dbReference type="SUPFAM" id="SSF53067">
    <property type="entry name" value="Actin-like ATPase domain"/>
    <property type="match status" value="2"/>
</dbReference>
<dbReference type="PROSITE" id="PS01075">
    <property type="entry name" value="ACETATE_KINASE_1"/>
    <property type="match status" value="1"/>
</dbReference>
<dbReference type="PROSITE" id="PS01076">
    <property type="entry name" value="ACETATE_KINASE_2"/>
    <property type="match status" value="1"/>
</dbReference>